<sequence>MPKRDDIKTILVIGSGPIVIGQAAEFDYAGTQACLSLKEEGYRVVLVNSNPATIMTDAEMADKVYIEPITLDFVSRIIRKERPDAILPTLGGQTGLNMAMELSAAGILDECNVEVLGTDLTAIKKAEDREAFRDLMNELGEPVPESDIIHNLDEAYTFVERIGYPVIVRPAYTLGGSGGGICHNEQELIETVTSGLKLSPVTQCLLEKSIAGFKEVEYEVMRDANNNAMVVCNMENIDPVGIHTGDSIVVAPSQTLSDREYQLLRDVSLKIIRALEIEGGCNVQLALDPDSYNYYVIEVNPRVSRSSALASKATGYPIAKLAAKIAVGLTLDEVRNPVTGTTYAHFEPTLDYVVAKIPRFAFDKFEQADRRLGTQMKATGEVMAIGRSWEEALLKAVRSLEIGADHLLLEEAENADAETLERKICFPEDDRLFFLAAALRRGQTIEQLHAKTKIDLFFLYKLSKTIELENRLKENPQNEEILAEAKRAGFSDAFIATCWNIDEQAIYDLRKAQNLFPVYKMVDTCAAEFESTTPYFYSTYEDENESIRSSKESVIVLGSGPIRIGQGVEFDYATVHSVWAIQQAGYEAIIINNNPETVSTDFSISDKLYFEPLTLEDVMHVIEIEQPLGVVVQFGGQTAINLADGLAKRGVKILGTSLEDTDRAENRDAFEKALEILQIPQPAGKTATSVEAAIKVATDIGYPVLVRPSYVLGGRAMEIVESEEALKHYMTNAVKVNPKHPVLVDRYVSGQEVEVDAISDGENVLIPGIMEHIERAGVHSGDSIAVYPAQRLSEQVKNTIVDYTTRLATGLNIIGMLNIQYVVDGEEVFVIEVNPRSSRTAPFLSKITEIPMANVATRVILGENLIDLGYTPGLAPEKQEIFVKVPVFSFAKLRSVDTSLGPEMKSTGEVMGKDVTLEKALYKGFVASGTTMHDYGTVLLTVADRDKEEAVELAKRFNRIGFTIMATKGTASTLEEAEIPVSQVKKIGENQETLIDYIRNGQVTLVVNTLTTGKRPERDGFQIRRESVENGIPVCTSLDTAEAILRVLESRSFELESMNASEVKQPKARV</sequence>
<name>CARB_LISIN</name>
<protein>
    <recommendedName>
        <fullName evidence="1">Carbamoyl phosphate synthase large chain</fullName>
        <ecNumber evidence="1">6.3.4.16</ecNumber>
        <ecNumber evidence="1">6.3.5.5</ecNumber>
    </recommendedName>
    <alternativeName>
        <fullName evidence="1">Carbamoyl phosphate synthetase ammonia chain</fullName>
    </alternativeName>
</protein>
<comment type="function">
    <text evidence="1">Large subunit of the glutamine-dependent carbamoyl phosphate synthetase (CPSase). CPSase catalyzes the formation of carbamoyl phosphate from the ammonia moiety of glutamine, carbonate, and phosphate donated by ATP, constituting the first step of 2 biosynthetic pathways, one leading to arginine and/or urea and the other to pyrimidine nucleotides. The large subunit (synthetase) binds the substrates ammonia (free or transferred from glutamine from the small subunit), hydrogencarbonate and ATP and carries out an ATP-coupled ligase reaction, activating hydrogencarbonate by forming carboxy phosphate which reacts with ammonia to form carbamoyl phosphate.</text>
</comment>
<comment type="catalytic activity">
    <reaction evidence="1">
        <text>hydrogencarbonate + L-glutamine + 2 ATP + H2O = carbamoyl phosphate + L-glutamate + 2 ADP + phosphate + 2 H(+)</text>
        <dbReference type="Rhea" id="RHEA:18633"/>
        <dbReference type="ChEBI" id="CHEBI:15377"/>
        <dbReference type="ChEBI" id="CHEBI:15378"/>
        <dbReference type="ChEBI" id="CHEBI:17544"/>
        <dbReference type="ChEBI" id="CHEBI:29985"/>
        <dbReference type="ChEBI" id="CHEBI:30616"/>
        <dbReference type="ChEBI" id="CHEBI:43474"/>
        <dbReference type="ChEBI" id="CHEBI:58228"/>
        <dbReference type="ChEBI" id="CHEBI:58359"/>
        <dbReference type="ChEBI" id="CHEBI:456216"/>
        <dbReference type="EC" id="6.3.5.5"/>
    </reaction>
</comment>
<comment type="catalytic activity">
    <molecule>Carbamoyl phosphate synthase large chain</molecule>
    <reaction evidence="1">
        <text>hydrogencarbonate + NH4(+) + 2 ATP = carbamoyl phosphate + 2 ADP + phosphate + 2 H(+)</text>
        <dbReference type="Rhea" id="RHEA:18029"/>
        <dbReference type="ChEBI" id="CHEBI:15378"/>
        <dbReference type="ChEBI" id="CHEBI:17544"/>
        <dbReference type="ChEBI" id="CHEBI:28938"/>
        <dbReference type="ChEBI" id="CHEBI:30616"/>
        <dbReference type="ChEBI" id="CHEBI:43474"/>
        <dbReference type="ChEBI" id="CHEBI:58228"/>
        <dbReference type="ChEBI" id="CHEBI:456216"/>
        <dbReference type="EC" id="6.3.4.16"/>
    </reaction>
</comment>
<comment type="cofactor">
    <cofactor evidence="1">
        <name>Mg(2+)</name>
        <dbReference type="ChEBI" id="CHEBI:18420"/>
    </cofactor>
    <cofactor evidence="1">
        <name>Mn(2+)</name>
        <dbReference type="ChEBI" id="CHEBI:29035"/>
    </cofactor>
    <text evidence="1">Binds 4 Mg(2+) or Mn(2+) ions per subunit.</text>
</comment>
<comment type="pathway">
    <text evidence="1">Amino-acid biosynthesis; L-arginine biosynthesis; carbamoyl phosphate from bicarbonate: step 1/1.</text>
</comment>
<comment type="pathway">
    <text evidence="1">Pyrimidine metabolism; UMP biosynthesis via de novo pathway; (S)-dihydroorotate from bicarbonate: step 1/3.</text>
</comment>
<comment type="subunit">
    <text evidence="1">Composed of two chains; the small (or glutamine) chain promotes the hydrolysis of glutamine to ammonia, which is used by the large (or ammonia) chain to synthesize carbamoyl phosphate. Tetramer of heterodimers (alpha,beta)4.</text>
</comment>
<comment type="domain">
    <text evidence="1">The large subunit is composed of 2 ATP-grasp domains that are involved in binding the 2 ATP molecules needed for carbamoyl phosphate synthesis. The N-terminal ATP-grasp domain (referred to as the carboxyphosphate synthetic component) catalyzes the ATP-dependent phosphorylation of hydrogencarbonate to carboxyphosphate and the subsequent nucleophilic attack by ammonia to form a carbamate intermediate. The C-terminal ATP-grasp domain (referred to as the carbamoyl phosphate synthetic component) then catalyzes the phosphorylation of carbamate with the second ATP to form the end product carbamoyl phosphate. The reactive and unstable enzyme intermediates are sequentially channeled from one active site to the next through the interior of the protein over a distance of at least 96 A.</text>
</comment>
<comment type="similarity">
    <text evidence="1">Belongs to the CarB family.</text>
</comment>
<accession>Q92AH3</accession>
<feature type="chain" id="PRO_0000145018" description="Carbamoyl phosphate synthase large chain">
    <location>
        <begin position="1"/>
        <end position="1070"/>
    </location>
</feature>
<feature type="domain" description="ATP-grasp 1" evidence="1">
    <location>
        <begin position="133"/>
        <end position="327"/>
    </location>
</feature>
<feature type="domain" description="ATP-grasp 2" evidence="1">
    <location>
        <begin position="671"/>
        <end position="861"/>
    </location>
</feature>
<feature type="domain" description="MGS-like" evidence="1">
    <location>
        <begin position="930"/>
        <end position="1070"/>
    </location>
</feature>
<feature type="region of interest" description="Carboxyphosphate synthetic domain" evidence="1">
    <location>
        <begin position="1"/>
        <end position="401"/>
    </location>
</feature>
<feature type="region of interest" description="Oligomerization domain" evidence="1">
    <location>
        <begin position="402"/>
        <end position="546"/>
    </location>
</feature>
<feature type="region of interest" description="Carbamoyl phosphate synthetic domain" evidence="1">
    <location>
        <begin position="547"/>
        <end position="929"/>
    </location>
</feature>
<feature type="region of interest" description="Allosteric domain" evidence="1">
    <location>
        <begin position="930"/>
        <end position="1070"/>
    </location>
</feature>
<feature type="binding site" evidence="1">
    <location>
        <position position="129"/>
    </location>
    <ligand>
        <name>ATP</name>
        <dbReference type="ChEBI" id="CHEBI:30616"/>
        <label>1</label>
    </ligand>
</feature>
<feature type="binding site" evidence="1">
    <location>
        <position position="169"/>
    </location>
    <ligand>
        <name>ATP</name>
        <dbReference type="ChEBI" id="CHEBI:30616"/>
        <label>1</label>
    </ligand>
</feature>
<feature type="binding site" evidence="1">
    <location>
        <position position="175"/>
    </location>
    <ligand>
        <name>ATP</name>
        <dbReference type="ChEBI" id="CHEBI:30616"/>
        <label>1</label>
    </ligand>
</feature>
<feature type="binding site" evidence="1">
    <location>
        <position position="176"/>
    </location>
    <ligand>
        <name>ATP</name>
        <dbReference type="ChEBI" id="CHEBI:30616"/>
        <label>1</label>
    </ligand>
</feature>
<feature type="binding site" evidence="1">
    <location>
        <position position="208"/>
    </location>
    <ligand>
        <name>ATP</name>
        <dbReference type="ChEBI" id="CHEBI:30616"/>
        <label>1</label>
    </ligand>
</feature>
<feature type="binding site" evidence="1">
    <location>
        <position position="210"/>
    </location>
    <ligand>
        <name>ATP</name>
        <dbReference type="ChEBI" id="CHEBI:30616"/>
        <label>1</label>
    </ligand>
</feature>
<feature type="binding site" evidence="1">
    <location>
        <position position="215"/>
    </location>
    <ligand>
        <name>ATP</name>
        <dbReference type="ChEBI" id="CHEBI:30616"/>
        <label>1</label>
    </ligand>
</feature>
<feature type="binding site" evidence="1">
    <location>
        <position position="241"/>
    </location>
    <ligand>
        <name>ATP</name>
        <dbReference type="ChEBI" id="CHEBI:30616"/>
        <label>1</label>
    </ligand>
</feature>
<feature type="binding site" evidence="1">
    <location>
        <position position="242"/>
    </location>
    <ligand>
        <name>ATP</name>
        <dbReference type="ChEBI" id="CHEBI:30616"/>
        <label>1</label>
    </ligand>
</feature>
<feature type="binding site" evidence="1">
    <location>
        <position position="243"/>
    </location>
    <ligand>
        <name>ATP</name>
        <dbReference type="ChEBI" id="CHEBI:30616"/>
        <label>1</label>
    </ligand>
</feature>
<feature type="binding site" evidence="1">
    <location>
        <position position="284"/>
    </location>
    <ligand>
        <name>ATP</name>
        <dbReference type="ChEBI" id="CHEBI:30616"/>
        <label>1</label>
    </ligand>
</feature>
<feature type="binding site" evidence="1">
    <location>
        <position position="284"/>
    </location>
    <ligand>
        <name>Mg(2+)</name>
        <dbReference type="ChEBI" id="CHEBI:18420"/>
        <label>1</label>
    </ligand>
</feature>
<feature type="binding site" evidence="1">
    <location>
        <position position="284"/>
    </location>
    <ligand>
        <name>Mn(2+)</name>
        <dbReference type="ChEBI" id="CHEBI:29035"/>
        <label>1</label>
    </ligand>
</feature>
<feature type="binding site" evidence="1">
    <location>
        <position position="298"/>
    </location>
    <ligand>
        <name>ATP</name>
        <dbReference type="ChEBI" id="CHEBI:30616"/>
        <label>1</label>
    </ligand>
</feature>
<feature type="binding site" evidence="1">
    <location>
        <position position="298"/>
    </location>
    <ligand>
        <name>Mg(2+)</name>
        <dbReference type="ChEBI" id="CHEBI:18420"/>
        <label>1</label>
    </ligand>
</feature>
<feature type="binding site" evidence="1">
    <location>
        <position position="298"/>
    </location>
    <ligand>
        <name>Mg(2+)</name>
        <dbReference type="ChEBI" id="CHEBI:18420"/>
        <label>2</label>
    </ligand>
</feature>
<feature type="binding site" evidence="1">
    <location>
        <position position="298"/>
    </location>
    <ligand>
        <name>Mn(2+)</name>
        <dbReference type="ChEBI" id="CHEBI:29035"/>
        <label>1</label>
    </ligand>
</feature>
<feature type="binding site" evidence="1">
    <location>
        <position position="298"/>
    </location>
    <ligand>
        <name>Mn(2+)</name>
        <dbReference type="ChEBI" id="CHEBI:29035"/>
        <label>2</label>
    </ligand>
</feature>
<feature type="binding site" evidence="1">
    <location>
        <position position="300"/>
    </location>
    <ligand>
        <name>Mg(2+)</name>
        <dbReference type="ChEBI" id="CHEBI:18420"/>
        <label>2</label>
    </ligand>
</feature>
<feature type="binding site" evidence="1">
    <location>
        <position position="300"/>
    </location>
    <ligand>
        <name>Mn(2+)</name>
        <dbReference type="ChEBI" id="CHEBI:29035"/>
        <label>2</label>
    </ligand>
</feature>
<feature type="binding site" evidence="1">
    <location>
        <position position="707"/>
    </location>
    <ligand>
        <name>ATP</name>
        <dbReference type="ChEBI" id="CHEBI:30616"/>
        <label>2</label>
    </ligand>
</feature>
<feature type="binding site" evidence="1">
    <location>
        <position position="746"/>
    </location>
    <ligand>
        <name>ATP</name>
        <dbReference type="ChEBI" id="CHEBI:30616"/>
        <label>2</label>
    </ligand>
</feature>
<feature type="binding site" evidence="1">
    <location>
        <position position="748"/>
    </location>
    <ligand>
        <name>ATP</name>
        <dbReference type="ChEBI" id="CHEBI:30616"/>
        <label>2</label>
    </ligand>
</feature>
<feature type="binding site" evidence="1">
    <location>
        <position position="752"/>
    </location>
    <ligand>
        <name>ATP</name>
        <dbReference type="ChEBI" id="CHEBI:30616"/>
        <label>2</label>
    </ligand>
</feature>
<feature type="binding site" evidence="1">
    <location>
        <position position="777"/>
    </location>
    <ligand>
        <name>ATP</name>
        <dbReference type="ChEBI" id="CHEBI:30616"/>
        <label>2</label>
    </ligand>
</feature>
<feature type="binding site" evidence="1">
    <location>
        <position position="778"/>
    </location>
    <ligand>
        <name>ATP</name>
        <dbReference type="ChEBI" id="CHEBI:30616"/>
        <label>2</label>
    </ligand>
</feature>
<feature type="binding site" evidence="1">
    <location>
        <position position="779"/>
    </location>
    <ligand>
        <name>ATP</name>
        <dbReference type="ChEBI" id="CHEBI:30616"/>
        <label>2</label>
    </ligand>
</feature>
<feature type="binding site" evidence="1">
    <location>
        <position position="780"/>
    </location>
    <ligand>
        <name>ATP</name>
        <dbReference type="ChEBI" id="CHEBI:30616"/>
        <label>2</label>
    </ligand>
</feature>
<feature type="binding site" evidence="1">
    <location>
        <position position="820"/>
    </location>
    <ligand>
        <name>ATP</name>
        <dbReference type="ChEBI" id="CHEBI:30616"/>
        <label>2</label>
    </ligand>
</feature>
<feature type="binding site" evidence="1">
    <location>
        <position position="820"/>
    </location>
    <ligand>
        <name>Mg(2+)</name>
        <dbReference type="ChEBI" id="CHEBI:18420"/>
        <label>3</label>
    </ligand>
</feature>
<feature type="binding site" evidence="1">
    <location>
        <position position="820"/>
    </location>
    <ligand>
        <name>Mn(2+)</name>
        <dbReference type="ChEBI" id="CHEBI:29035"/>
        <label>3</label>
    </ligand>
</feature>
<feature type="binding site" evidence="1">
    <location>
        <position position="832"/>
    </location>
    <ligand>
        <name>ATP</name>
        <dbReference type="ChEBI" id="CHEBI:30616"/>
        <label>2</label>
    </ligand>
</feature>
<feature type="binding site" evidence="1">
    <location>
        <position position="832"/>
    </location>
    <ligand>
        <name>Mg(2+)</name>
        <dbReference type="ChEBI" id="CHEBI:18420"/>
        <label>3</label>
    </ligand>
</feature>
<feature type="binding site" evidence="1">
    <location>
        <position position="832"/>
    </location>
    <ligand>
        <name>Mg(2+)</name>
        <dbReference type="ChEBI" id="CHEBI:18420"/>
        <label>4</label>
    </ligand>
</feature>
<feature type="binding site" evidence="1">
    <location>
        <position position="832"/>
    </location>
    <ligand>
        <name>Mn(2+)</name>
        <dbReference type="ChEBI" id="CHEBI:29035"/>
        <label>3</label>
    </ligand>
</feature>
<feature type="binding site" evidence="1">
    <location>
        <position position="832"/>
    </location>
    <ligand>
        <name>Mn(2+)</name>
        <dbReference type="ChEBI" id="CHEBI:29035"/>
        <label>4</label>
    </ligand>
</feature>
<feature type="binding site" evidence="1">
    <location>
        <position position="834"/>
    </location>
    <ligand>
        <name>Mg(2+)</name>
        <dbReference type="ChEBI" id="CHEBI:18420"/>
        <label>4</label>
    </ligand>
</feature>
<feature type="binding site" evidence="1">
    <location>
        <position position="834"/>
    </location>
    <ligand>
        <name>Mn(2+)</name>
        <dbReference type="ChEBI" id="CHEBI:29035"/>
        <label>4</label>
    </ligand>
</feature>
<reference key="1">
    <citation type="journal article" date="2001" name="Science">
        <title>Comparative genomics of Listeria species.</title>
        <authorList>
            <person name="Glaser P."/>
            <person name="Frangeul L."/>
            <person name="Buchrieser C."/>
            <person name="Rusniok C."/>
            <person name="Amend A."/>
            <person name="Baquero F."/>
            <person name="Berche P."/>
            <person name="Bloecker H."/>
            <person name="Brandt P."/>
            <person name="Chakraborty T."/>
            <person name="Charbit A."/>
            <person name="Chetouani F."/>
            <person name="Couve E."/>
            <person name="de Daruvar A."/>
            <person name="Dehoux P."/>
            <person name="Domann E."/>
            <person name="Dominguez-Bernal G."/>
            <person name="Duchaud E."/>
            <person name="Durant L."/>
            <person name="Dussurget O."/>
            <person name="Entian K.-D."/>
            <person name="Fsihi H."/>
            <person name="Garcia-del Portillo F."/>
            <person name="Garrido P."/>
            <person name="Gautier L."/>
            <person name="Goebel W."/>
            <person name="Gomez-Lopez N."/>
            <person name="Hain T."/>
            <person name="Hauf J."/>
            <person name="Jackson D."/>
            <person name="Jones L.-M."/>
            <person name="Kaerst U."/>
            <person name="Kreft J."/>
            <person name="Kuhn M."/>
            <person name="Kunst F."/>
            <person name="Kurapkat G."/>
            <person name="Madueno E."/>
            <person name="Maitournam A."/>
            <person name="Mata Vicente J."/>
            <person name="Ng E."/>
            <person name="Nedjari H."/>
            <person name="Nordsiek G."/>
            <person name="Novella S."/>
            <person name="de Pablos B."/>
            <person name="Perez-Diaz J.-C."/>
            <person name="Purcell R."/>
            <person name="Remmel B."/>
            <person name="Rose M."/>
            <person name="Schlueter T."/>
            <person name="Simoes N."/>
            <person name="Tierrez A."/>
            <person name="Vazquez-Boland J.-A."/>
            <person name="Voss H."/>
            <person name="Wehland J."/>
            <person name="Cossart P."/>
        </authorList>
    </citation>
    <scope>NUCLEOTIDE SEQUENCE [LARGE SCALE GENOMIC DNA]</scope>
    <source>
        <strain>ATCC BAA-680 / CLIP 11262</strain>
    </source>
</reference>
<organism>
    <name type="scientific">Listeria innocua serovar 6a (strain ATCC BAA-680 / CLIP 11262)</name>
    <dbReference type="NCBI Taxonomy" id="272626"/>
    <lineage>
        <taxon>Bacteria</taxon>
        <taxon>Bacillati</taxon>
        <taxon>Bacillota</taxon>
        <taxon>Bacilli</taxon>
        <taxon>Bacillales</taxon>
        <taxon>Listeriaceae</taxon>
        <taxon>Listeria</taxon>
    </lineage>
</organism>
<dbReference type="EC" id="6.3.4.16" evidence="1"/>
<dbReference type="EC" id="6.3.5.5" evidence="1"/>
<dbReference type="EMBL" id="AL596170">
    <property type="protein sequence ID" value="CAC97179.1"/>
    <property type="molecule type" value="Genomic_DNA"/>
</dbReference>
<dbReference type="PIR" id="AC1676">
    <property type="entry name" value="AC1676"/>
</dbReference>
<dbReference type="RefSeq" id="WP_010991677.1">
    <property type="nucleotide sequence ID" value="NC_003212.1"/>
</dbReference>
<dbReference type="SMR" id="Q92AH3"/>
<dbReference type="STRING" id="272626.gene:17566307"/>
<dbReference type="GeneID" id="93235287"/>
<dbReference type="KEGG" id="lin:pyrAB"/>
<dbReference type="eggNOG" id="COG0458">
    <property type="taxonomic scope" value="Bacteria"/>
</dbReference>
<dbReference type="HOGENOM" id="CLU_000513_1_0_9"/>
<dbReference type="OrthoDB" id="9804197at2"/>
<dbReference type="UniPathway" id="UPA00068">
    <property type="reaction ID" value="UER00171"/>
</dbReference>
<dbReference type="UniPathway" id="UPA00070">
    <property type="reaction ID" value="UER00115"/>
</dbReference>
<dbReference type="Proteomes" id="UP000002513">
    <property type="component" value="Chromosome"/>
</dbReference>
<dbReference type="GO" id="GO:0005737">
    <property type="term" value="C:cytoplasm"/>
    <property type="evidence" value="ECO:0007669"/>
    <property type="project" value="TreeGrafter"/>
</dbReference>
<dbReference type="GO" id="GO:0005524">
    <property type="term" value="F:ATP binding"/>
    <property type="evidence" value="ECO:0007669"/>
    <property type="project" value="UniProtKB-UniRule"/>
</dbReference>
<dbReference type="GO" id="GO:0004087">
    <property type="term" value="F:carbamoyl-phosphate synthase (ammonia) activity"/>
    <property type="evidence" value="ECO:0007669"/>
    <property type="project" value="RHEA"/>
</dbReference>
<dbReference type="GO" id="GO:0004088">
    <property type="term" value="F:carbamoyl-phosphate synthase (glutamine-hydrolyzing) activity"/>
    <property type="evidence" value="ECO:0007669"/>
    <property type="project" value="UniProtKB-UniRule"/>
</dbReference>
<dbReference type="GO" id="GO:0046872">
    <property type="term" value="F:metal ion binding"/>
    <property type="evidence" value="ECO:0007669"/>
    <property type="project" value="UniProtKB-KW"/>
</dbReference>
<dbReference type="GO" id="GO:0044205">
    <property type="term" value="P:'de novo' UMP biosynthetic process"/>
    <property type="evidence" value="ECO:0007669"/>
    <property type="project" value="UniProtKB-UniRule"/>
</dbReference>
<dbReference type="GO" id="GO:0006541">
    <property type="term" value="P:glutamine metabolic process"/>
    <property type="evidence" value="ECO:0007669"/>
    <property type="project" value="TreeGrafter"/>
</dbReference>
<dbReference type="GO" id="GO:0006526">
    <property type="term" value="P:L-arginine biosynthetic process"/>
    <property type="evidence" value="ECO:0007669"/>
    <property type="project" value="UniProtKB-UniRule"/>
</dbReference>
<dbReference type="CDD" id="cd01424">
    <property type="entry name" value="MGS_CPS_II"/>
    <property type="match status" value="1"/>
</dbReference>
<dbReference type="FunFam" id="1.10.1030.10:FF:000002">
    <property type="entry name" value="Carbamoyl-phosphate synthase large chain"/>
    <property type="match status" value="1"/>
</dbReference>
<dbReference type="FunFam" id="3.30.1490.20:FF:000001">
    <property type="entry name" value="Carbamoyl-phosphate synthase large chain"/>
    <property type="match status" value="1"/>
</dbReference>
<dbReference type="FunFam" id="3.30.470.20:FF:000001">
    <property type="entry name" value="Carbamoyl-phosphate synthase large chain"/>
    <property type="match status" value="1"/>
</dbReference>
<dbReference type="FunFam" id="3.30.470.20:FF:000026">
    <property type="entry name" value="Carbamoyl-phosphate synthase large chain"/>
    <property type="match status" value="1"/>
</dbReference>
<dbReference type="FunFam" id="3.40.50.1380:FF:000011">
    <property type="entry name" value="Carbamoyl-phosphate synthase large chain"/>
    <property type="match status" value="1"/>
</dbReference>
<dbReference type="FunFam" id="3.40.50.20:FF:000001">
    <property type="entry name" value="Carbamoyl-phosphate synthase large chain"/>
    <property type="match status" value="2"/>
</dbReference>
<dbReference type="Gene3D" id="3.40.50.20">
    <property type="match status" value="2"/>
</dbReference>
<dbReference type="Gene3D" id="3.30.1490.20">
    <property type="entry name" value="ATP-grasp fold, A domain"/>
    <property type="match status" value="1"/>
</dbReference>
<dbReference type="Gene3D" id="3.30.470.20">
    <property type="entry name" value="ATP-grasp fold, B domain"/>
    <property type="match status" value="2"/>
</dbReference>
<dbReference type="Gene3D" id="1.10.1030.10">
    <property type="entry name" value="Carbamoyl-phosphate synthetase, large subunit oligomerisation domain"/>
    <property type="match status" value="1"/>
</dbReference>
<dbReference type="Gene3D" id="3.40.50.1380">
    <property type="entry name" value="Methylglyoxal synthase-like domain"/>
    <property type="match status" value="1"/>
</dbReference>
<dbReference type="HAMAP" id="MF_01210_A">
    <property type="entry name" value="CPSase_L_chain_A"/>
    <property type="match status" value="1"/>
</dbReference>
<dbReference type="HAMAP" id="MF_01210_B">
    <property type="entry name" value="CPSase_L_chain_B"/>
    <property type="match status" value="1"/>
</dbReference>
<dbReference type="InterPro" id="IPR011761">
    <property type="entry name" value="ATP-grasp"/>
</dbReference>
<dbReference type="InterPro" id="IPR013815">
    <property type="entry name" value="ATP_grasp_subdomain_1"/>
</dbReference>
<dbReference type="InterPro" id="IPR006275">
    <property type="entry name" value="CarbamoylP_synth_lsu"/>
</dbReference>
<dbReference type="InterPro" id="IPR005480">
    <property type="entry name" value="CarbamoylP_synth_lsu_oligo"/>
</dbReference>
<dbReference type="InterPro" id="IPR036897">
    <property type="entry name" value="CarbamoylP_synth_lsu_oligo_sf"/>
</dbReference>
<dbReference type="InterPro" id="IPR005479">
    <property type="entry name" value="CbamoylP_synth_lsu-like_ATP-bd"/>
</dbReference>
<dbReference type="InterPro" id="IPR005483">
    <property type="entry name" value="CbamoylP_synth_lsu_CPSase_dom"/>
</dbReference>
<dbReference type="InterPro" id="IPR011607">
    <property type="entry name" value="MGS-like_dom"/>
</dbReference>
<dbReference type="InterPro" id="IPR036914">
    <property type="entry name" value="MGS-like_dom_sf"/>
</dbReference>
<dbReference type="InterPro" id="IPR033937">
    <property type="entry name" value="MGS_CPS_CarB"/>
</dbReference>
<dbReference type="InterPro" id="IPR016185">
    <property type="entry name" value="PreATP-grasp_dom_sf"/>
</dbReference>
<dbReference type="NCBIfam" id="TIGR01369">
    <property type="entry name" value="CPSaseII_lrg"/>
    <property type="match status" value="1"/>
</dbReference>
<dbReference type="NCBIfam" id="NF003671">
    <property type="entry name" value="PRK05294.1"/>
    <property type="match status" value="1"/>
</dbReference>
<dbReference type="NCBIfam" id="NF009455">
    <property type="entry name" value="PRK12815.1"/>
    <property type="match status" value="1"/>
</dbReference>
<dbReference type="PANTHER" id="PTHR11405:SF53">
    <property type="entry name" value="CARBAMOYL-PHOSPHATE SYNTHASE [AMMONIA], MITOCHONDRIAL"/>
    <property type="match status" value="1"/>
</dbReference>
<dbReference type="PANTHER" id="PTHR11405">
    <property type="entry name" value="CARBAMOYLTRANSFERASE FAMILY MEMBER"/>
    <property type="match status" value="1"/>
</dbReference>
<dbReference type="Pfam" id="PF02786">
    <property type="entry name" value="CPSase_L_D2"/>
    <property type="match status" value="2"/>
</dbReference>
<dbReference type="Pfam" id="PF02787">
    <property type="entry name" value="CPSase_L_D3"/>
    <property type="match status" value="1"/>
</dbReference>
<dbReference type="Pfam" id="PF02142">
    <property type="entry name" value="MGS"/>
    <property type="match status" value="1"/>
</dbReference>
<dbReference type="PRINTS" id="PR00098">
    <property type="entry name" value="CPSASE"/>
</dbReference>
<dbReference type="SMART" id="SM01096">
    <property type="entry name" value="CPSase_L_D3"/>
    <property type="match status" value="1"/>
</dbReference>
<dbReference type="SMART" id="SM00851">
    <property type="entry name" value="MGS"/>
    <property type="match status" value="1"/>
</dbReference>
<dbReference type="SUPFAM" id="SSF48108">
    <property type="entry name" value="Carbamoyl phosphate synthetase, large subunit connection domain"/>
    <property type="match status" value="1"/>
</dbReference>
<dbReference type="SUPFAM" id="SSF56059">
    <property type="entry name" value="Glutathione synthetase ATP-binding domain-like"/>
    <property type="match status" value="2"/>
</dbReference>
<dbReference type="SUPFAM" id="SSF52335">
    <property type="entry name" value="Methylglyoxal synthase-like"/>
    <property type="match status" value="1"/>
</dbReference>
<dbReference type="SUPFAM" id="SSF52440">
    <property type="entry name" value="PreATP-grasp domain"/>
    <property type="match status" value="2"/>
</dbReference>
<dbReference type="PROSITE" id="PS50975">
    <property type="entry name" value="ATP_GRASP"/>
    <property type="match status" value="2"/>
</dbReference>
<dbReference type="PROSITE" id="PS00866">
    <property type="entry name" value="CPSASE_1"/>
    <property type="match status" value="2"/>
</dbReference>
<dbReference type="PROSITE" id="PS00867">
    <property type="entry name" value="CPSASE_2"/>
    <property type="match status" value="2"/>
</dbReference>
<dbReference type="PROSITE" id="PS51855">
    <property type="entry name" value="MGS"/>
    <property type="match status" value="1"/>
</dbReference>
<proteinExistence type="inferred from homology"/>
<gene>
    <name evidence="1" type="primary">carB</name>
    <name type="synonym">pyrAB</name>
    <name type="ordered locus">lin1949</name>
</gene>
<keyword id="KW-0028">Amino-acid biosynthesis</keyword>
<keyword id="KW-0055">Arginine biosynthesis</keyword>
<keyword id="KW-0067">ATP-binding</keyword>
<keyword id="KW-0436">Ligase</keyword>
<keyword id="KW-0460">Magnesium</keyword>
<keyword id="KW-0464">Manganese</keyword>
<keyword id="KW-0479">Metal-binding</keyword>
<keyword id="KW-0547">Nucleotide-binding</keyword>
<keyword id="KW-0665">Pyrimidine biosynthesis</keyword>
<keyword id="KW-0677">Repeat</keyword>
<evidence type="ECO:0000255" key="1">
    <source>
        <dbReference type="HAMAP-Rule" id="MF_01210"/>
    </source>
</evidence>